<keyword id="KW-0067">ATP-binding</keyword>
<keyword id="KW-0963">Cytoplasm</keyword>
<keyword id="KW-0418">Kinase</keyword>
<keyword id="KW-0545">Nucleotide biosynthesis</keyword>
<keyword id="KW-0547">Nucleotide-binding</keyword>
<keyword id="KW-0808">Transferase</keyword>
<reference key="1">
    <citation type="journal article" date="2008" name="ISME J.">
        <title>Comparative genomics of two ecotypes of the marine planktonic copiotroph Alteromonas macleodii suggests alternative lifestyles associated with different kinds of particulate organic matter.</title>
        <authorList>
            <person name="Ivars-Martinez E."/>
            <person name="Martin-Cuadrado A.-B."/>
            <person name="D'Auria G."/>
            <person name="Mira A."/>
            <person name="Ferriera S."/>
            <person name="Johnson J."/>
            <person name="Friedman R."/>
            <person name="Rodriguez-Valera F."/>
        </authorList>
    </citation>
    <scope>NUCLEOTIDE SEQUENCE [LARGE SCALE GENOMIC DNA]</scope>
    <source>
        <strain>DSM 17117 / CIP 110805 / LMG 28347 / Deep ecotype</strain>
    </source>
</reference>
<organism>
    <name type="scientific">Alteromonas mediterranea (strain DSM 17117 / CIP 110805 / LMG 28347 / Deep ecotype)</name>
    <dbReference type="NCBI Taxonomy" id="1774373"/>
    <lineage>
        <taxon>Bacteria</taxon>
        <taxon>Pseudomonadati</taxon>
        <taxon>Pseudomonadota</taxon>
        <taxon>Gammaproteobacteria</taxon>
        <taxon>Alteromonadales</taxon>
        <taxon>Alteromonadaceae</taxon>
        <taxon>Alteromonas/Salinimonas group</taxon>
        <taxon>Alteromonas</taxon>
    </lineage>
</organism>
<name>KAD_ALTMD</name>
<feature type="chain" id="PRO_1000100526" description="Adenylate kinase">
    <location>
        <begin position="1"/>
        <end position="214"/>
    </location>
</feature>
<feature type="region of interest" description="NMP" evidence="1">
    <location>
        <begin position="30"/>
        <end position="59"/>
    </location>
</feature>
<feature type="region of interest" description="LID" evidence="1">
    <location>
        <begin position="122"/>
        <end position="159"/>
    </location>
</feature>
<feature type="binding site" evidence="1">
    <location>
        <begin position="10"/>
        <end position="15"/>
    </location>
    <ligand>
        <name>ATP</name>
        <dbReference type="ChEBI" id="CHEBI:30616"/>
    </ligand>
</feature>
<feature type="binding site" evidence="1">
    <location>
        <position position="31"/>
    </location>
    <ligand>
        <name>AMP</name>
        <dbReference type="ChEBI" id="CHEBI:456215"/>
    </ligand>
</feature>
<feature type="binding site" evidence="1">
    <location>
        <position position="36"/>
    </location>
    <ligand>
        <name>AMP</name>
        <dbReference type="ChEBI" id="CHEBI:456215"/>
    </ligand>
</feature>
<feature type="binding site" evidence="1">
    <location>
        <begin position="57"/>
        <end position="59"/>
    </location>
    <ligand>
        <name>AMP</name>
        <dbReference type="ChEBI" id="CHEBI:456215"/>
    </ligand>
</feature>
<feature type="binding site" evidence="1">
    <location>
        <begin position="85"/>
        <end position="88"/>
    </location>
    <ligand>
        <name>AMP</name>
        <dbReference type="ChEBI" id="CHEBI:456215"/>
    </ligand>
</feature>
<feature type="binding site" evidence="1">
    <location>
        <position position="92"/>
    </location>
    <ligand>
        <name>AMP</name>
        <dbReference type="ChEBI" id="CHEBI:456215"/>
    </ligand>
</feature>
<feature type="binding site" evidence="1">
    <location>
        <position position="123"/>
    </location>
    <ligand>
        <name>ATP</name>
        <dbReference type="ChEBI" id="CHEBI:30616"/>
    </ligand>
</feature>
<feature type="binding site" evidence="1">
    <location>
        <begin position="132"/>
        <end position="133"/>
    </location>
    <ligand>
        <name>ATP</name>
        <dbReference type="ChEBI" id="CHEBI:30616"/>
    </ligand>
</feature>
<feature type="binding site" evidence="1">
    <location>
        <position position="156"/>
    </location>
    <ligand>
        <name>AMP</name>
        <dbReference type="ChEBI" id="CHEBI:456215"/>
    </ligand>
</feature>
<feature type="binding site" evidence="1">
    <location>
        <position position="167"/>
    </location>
    <ligand>
        <name>AMP</name>
        <dbReference type="ChEBI" id="CHEBI:456215"/>
    </ligand>
</feature>
<feature type="binding site" evidence="1">
    <location>
        <position position="200"/>
    </location>
    <ligand>
        <name>ATP</name>
        <dbReference type="ChEBI" id="CHEBI:30616"/>
    </ligand>
</feature>
<evidence type="ECO:0000255" key="1">
    <source>
        <dbReference type="HAMAP-Rule" id="MF_00235"/>
    </source>
</evidence>
<protein>
    <recommendedName>
        <fullName evidence="1">Adenylate kinase</fullName>
        <shortName evidence="1">AK</shortName>
        <ecNumber evidence="1">2.7.4.3</ecNumber>
    </recommendedName>
    <alternativeName>
        <fullName evidence="1">ATP-AMP transphosphorylase</fullName>
    </alternativeName>
    <alternativeName>
        <fullName evidence="1">ATP:AMP phosphotransferase</fullName>
    </alternativeName>
    <alternativeName>
        <fullName evidence="1">Adenylate monophosphate kinase</fullName>
    </alternativeName>
</protein>
<proteinExistence type="inferred from homology"/>
<accession>B4RU55</accession>
<accession>F2G8S4</accession>
<gene>
    <name evidence="1" type="primary">adk</name>
    <name type="ordered locus">MADE_1013250</name>
</gene>
<comment type="function">
    <text evidence="1">Catalyzes the reversible transfer of the terminal phosphate group between ATP and AMP. Plays an important role in cellular energy homeostasis and in adenine nucleotide metabolism.</text>
</comment>
<comment type="catalytic activity">
    <reaction evidence="1">
        <text>AMP + ATP = 2 ADP</text>
        <dbReference type="Rhea" id="RHEA:12973"/>
        <dbReference type="ChEBI" id="CHEBI:30616"/>
        <dbReference type="ChEBI" id="CHEBI:456215"/>
        <dbReference type="ChEBI" id="CHEBI:456216"/>
        <dbReference type="EC" id="2.7.4.3"/>
    </reaction>
</comment>
<comment type="pathway">
    <text evidence="1">Purine metabolism; AMP biosynthesis via salvage pathway; AMP from ADP: step 1/1.</text>
</comment>
<comment type="subunit">
    <text evidence="1">Monomer.</text>
</comment>
<comment type="subcellular location">
    <subcellularLocation>
        <location evidence="1">Cytoplasm</location>
    </subcellularLocation>
</comment>
<comment type="domain">
    <text evidence="1">Consists of three domains, a large central CORE domain and two small peripheral domains, NMPbind and LID, which undergo movements during catalysis. The LID domain closes over the site of phosphoryl transfer upon ATP binding. Assembling and dissambling the active center during each catalytic cycle provides an effective means to prevent ATP hydrolysis.</text>
</comment>
<comment type="similarity">
    <text evidence="1">Belongs to the adenylate kinase family.</text>
</comment>
<dbReference type="EC" id="2.7.4.3" evidence="1"/>
<dbReference type="EMBL" id="CP001103">
    <property type="protein sequence ID" value="AEA98784.1"/>
    <property type="molecule type" value="Genomic_DNA"/>
</dbReference>
<dbReference type="RefSeq" id="WP_012519076.1">
    <property type="nucleotide sequence ID" value="NC_011138.3"/>
</dbReference>
<dbReference type="SMR" id="B4RU55"/>
<dbReference type="GeneID" id="56342952"/>
<dbReference type="KEGG" id="amc:MADE_1013250"/>
<dbReference type="HOGENOM" id="CLU_032354_1_2_6"/>
<dbReference type="UniPathway" id="UPA00588">
    <property type="reaction ID" value="UER00649"/>
</dbReference>
<dbReference type="Proteomes" id="UP000001870">
    <property type="component" value="Chromosome"/>
</dbReference>
<dbReference type="GO" id="GO:0005737">
    <property type="term" value="C:cytoplasm"/>
    <property type="evidence" value="ECO:0007669"/>
    <property type="project" value="UniProtKB-SubCell"/>
</dbReference>
<dbReference type="GO" id="GO:0004017">
    <property type="term" value="F:adenylate kinase activity"/>
    <property type="evidence" value="ECO:0007669"/>
    <property type="project" value="UniProtKB-UniRule"/>
</dbReference>
<dbReference type="GO" id="GO:0005524">
    <property type="term" value="F:ATP binding"/>
    <property type="evidence" value="ECO:0007669"/>
    <property type="project" value="UniProtKB-UniRule"/>
</dbReference>
<dbReference type="GO" id="GO:0044209">
    <property type="term" value="P:AMP salvage"/>
    <property type="evidence" value="ECO:0007669"/>
    <property type="project" value="UniProtKB-UniRule"/>
</dbReference>
<dbReference type="CDD" id="cd01428">
    <property type="entry name" value="ADK"/>
    <property type="match status" value="1"/>
</dbReference>
<dbReference type="FunFam" id="3.40.50.300:FF:000106">
    <property type="entry name" value="Adenylate kinase mitochondrial"/>
    <property type="match status" value="1"/>
</dbReference>
<dbReference type="Gene3D" id="3.40.50.300">
    <property type="entry name" value="P-loop containing nucleotide triphosphate hydrolases"/>
    <property type="match status" value="1"/>
</dbReference>
<dbReference type="HAMAP" id="MF_00235">
    <property type="entry name" value="Adenylate_kinase_Adk"/>
    <property type="match status" value="1"/>
</dbReference>
<dbReference type="InterPro" id="IPR006259">
    <property type="entry name" value="Adenyl_kin_sub"/>
</dbReference>
<dbReference type="InterPro" id="IPR000850">
    <property type="entry name" value="Adenylat/UMP-CMP_kin"/>
</dbReference>
<dbReference type="InterPro" id="IPR033690">
    <property type="entry name" value="Adenylat_kinase_CS"/>
</dbReference>
<dbReference type="InterPro" id="IPR007862">
    <property type="entry name" value="Adenylate_kinase_lid-dom"/>
</dbReference>
<dbReference type="InterPro" id="IPR027417">
    <property type="entry name" value="P-loop_NTPase"/>
</dbReference>
<dbReference type="NCBIfam" id="TIGR01351">
    <property type="entry name" value="adk"/>
    <property type="match status" value="1"/>
</dbReference>
<dbReference type="NCBIfam" id="NF001379">
    <property type="entry name" value="PRK00279.1-1"/>
    <property type="match status" value="1"/>
</dbReference>
<dbReference type="NCBIfam" id="NF001380">
    <property type="entry name" value="PRK00279.1-2"/>
    <property type="match status" value="1"/>
</dbReference>
<dbReference type="NCBIfam" id="NF001381">
    <property type="entry name" value="PRK00279.1-3"/>
    <property type="match status" value="1"/>
</dbReference>
<dbReference type="PANTHER" id="PTHR23359">
    <property type="entry name" value="NUCLEOTIDE KINASE"/>
    <property type="match status" value="1"/>
</dbReference>
<dbReference type="Pfam" id="PF00406">
    <property type="entry name" value="ADK"/>
    <property type="match status" value="1"/>
</dbReference>
<dbReference type="Pfam" id="PF05191">
    <property type="entry name" value="ADK_lid"/>
    <property type="match status" value="1"/>
</dbReference>
<dbReference type="PRINTS" id="PR00094">
    <property type="entry name" value="ADENYLTKNASE"/>
</dbReference>
<dbReference type="SUPFAM" id="SSF52540">
    <property type="entry name" value="P-loop containing nucleoside triphosphate hydrolases"/>
    <property type="match status" value="1"/>
</dbReference>
<dbReference type="PROSITE" id="PS00113">
    <property type="entry name" value="ADENYLATE_KINASE"/>
    <property type="match status" value="1"/>
</dbReference>
<sequence>MRIILLGAPGAGKGTQAQFLMGKYGIPQISTGDMLRAAIKAGTELGLEAKRVMDEGKLVSDEIIIGLVKERIAQDDCKDGFLLDGFPRTIPQADAMKEAGVSVDHCIEFDVPDDVIVERMGGRRVHPASGRVYHVVYNPPKVEGKDNETGDDLIVRDDDKEETVRKRLAIYHEQTKPLVNYYSAEAEAGNCEYHKLDGTRPVEEVSAELAERLG</sequence>